<name>ERF3A_MOUSE</name>
<sequence>MDPSSGGGGGGGGGGSSSSSDSAPDCWDQTDMEAPGPGPCGGGGSGSGSMAAVAEAQRENLSAAFSRQLNVNAKPFVPNVHAAEFVPSFLRGPAQPPLSPAGAAGGDHGAGSGAGGPSEPVESSQDQSCEGSNSTVSMELSEPVVENGETEMSPEESWEHKEEISEAEPGGGSSGDGRPPEESTQEMMEEEEEIPKPKSAVAPPGAPKKEHVNVVFIGHVDAGKSTIGGQIMYLTGMVDKRTLEKYEREAKEKNRETWYLSWALDTNQEERDKGKTVEVGRAYFETEKKHFTILDAPGHKSFVPNMIGGASQADLAVLVISARKGEFETGFEKGGQTREHAMLAKTAGVKHLIVLINKMDDPTVNWSNERYEECKEKLVPFLKKVGFNPKKDIHFMPCSGLTGANLKEQSDFCPWYIGLPFIPYLDNLPNFNRSVDGPIRLPIVDKYKDMGTVVLGKLESGSICKGQQLVMMPNKHNVEVLGILSDDVETDSVAPGENLKIRLKGIEEEEILPGFILCDLNNLCHSGRTFDAQIVIIEHKSIICPGYNAVLHIHTCIEEVEITALICLVDKKSGEKSKTRPRFVKQDQVCIARLRTAGTICLETFKDFPQMGRFTLRDEGKTIAIGKVLKLVPEKD</sequence>
<reference key="1">
    <citation type="journal article" date="2009" name="PLoS Biol.">
        <title>Lineage-specific biology revealed by a finished genome assembly of the mouse.</title>
        <authorList>
            <person name="Church D.M."/>
            <person name="Goodstadt L."/>
            <person name="Hillier L.W."/>
            <person name="Zody M.C."/>
            <person name="Goldstein S."/>
            <person name="She X."/>
            <person name="Bult C.J."/>
            <person name="Agarwala R."/>
            <person name="Cherry J.L."/>
            <person name="DiCuccio M."/>
            <person name="Hlavina W."/>
            <person name="Kapustin Y."/>
            <person name="Meric P."/>
            <person name="Maglott D."/>
            <person name="Birtle Z."/>
            <person name="Marques A.C."/>
            <person name="Graves T."/>
            <person name="Zhou S."/>
            <person name="Teague B."/>
            <person name="Potamousis K."/>
            <person name="Churas C."/>
            <person name="Place M."/>
            <person name="Herschleb J."/>
            <person name="Runnheim R."/>
            <person name="Forrest D."/>
            <person name="Amos-Landgraf J."/>
            <person name="Schwartz D.C."/>
            <person name="Cheng Z."/>
            <person name="Lindblad-Toh K."/>
            <person name="Eichler E.E."/>
            <person name="Ponting C.P."/>
        </authorList>
    </citation>
    <scope>NUCLEOTIDE SEQUENCE [LARGE SCALE GENOMIC DNA]</scope>
    <source>
        <strain>C57BL/6J</strain>
    </source>
</reference>
<reference key="2">
    <citation type="submission" date="2005-07" db="EMBL/GenBank/DDBJ databases">
        <authorList>
            <person name="Mural R.J."/>
            <person name="Adams M.D."/>
            <person name="Myers E.W."/>
            <person name="Smith H.O."/>
            <person name="Venter J.C."/>
        </authorList>
    </citation>
    <scope>NUCLEOTIDE SEQUENCE [LARGE SCALE GENOMIC DNA]</scope>
</reference>
<reference key="3">
    <citation type="journal article" date="2004" name="Genome Res.">
        <title>The status, quality, and expansion of the NIH full-length cDNA project: the Mammalian Gene Collection (MGC).</title>
        <authorList>
            <consortium name="The MGC Project Team"/>
        </authorList>
    </citation>
    <scope>NUCLEOTIDE SEQUENCE [LARGE SCALE MRNA] OF 2-636 (ISOFORM 1)</scope>
    <source>
        <strain>Czech II</strain>
        <tissue>Eye</tissue>
        <tissue>Mammary tumor</tissue>
    </source>
</reference>
<reference key="4">
    <citation type="journal article" date="1998" name="J. Biol. Chem.">
        <title>Molecular cloning of a novel member of the eukaryotic polypeptide chain-releasing factors (eRF). Its identification as eRF3 interacting with eRF1.</title>
        <authorList>
            <person name="Hoshino S."/>
            <person name="Imai M."/>
            <person name="Mizutani M."/>
            <person name="Kikuchi Y."/>
            <person name="Hanaoka F."/>
            <person name="Ui M."/>
            <person name="Katada T."/>
        </authorList>
    </citation>
    <scope>NUCLEOTIDE SEQUENCE [MRNA] OF 86-636 (ISOFORM 2)</scope>
</reference>
<reference key="5">
    <citation type="submission" date="2007-04" db="UniProtKB">
        <authorList>
            <person name="Lubec G."/>
            <person name="Kang S.U."/>
        </authorList>
    </citation>
    <scope>PROTEIN SEQUENCE OF 441-448</scope>
    <scope>IDENTIFICATION BY MASS SPECTROMETRY</scope>
    <source>
        <strain>C57BL/6J</strain>
        <tissue>Brain</tissue>
    </source>
</reference>
<reference key="6">
    <citation type="journal article" date="2010" name="Cell">
        <title>A tissue-specific atlas of mouse protein phosphorylation and expression.</title>
        <authorList>
            <person name="Huttlin E.L."/>
            <person name="Jedrychowski M.P."/>
            <person name="Elias J.E."/>
            <person name="Goswami T."/>
            <person name="Rad R."/>
            <person name="Beausoleil S.A."/>
            <person name="Villen J."/>
            <person name="Haas W."/>
            <person name="Sowa M.E."/>
            <person name="Gygi S.P."/>
        </authorList>
    </citation>
    <scope>IDENTIFICATION BY MASS SPECTROMETRY [LARGE SCALE ANALYSIS]</scope>
    <source>
        <tissue>Brain</tissue>
        <tissue>Brown adipose tissue</tissue>
        <tissue>Heart</tissue>
        <tissue>Kidney</tissue>
        <tissue>Liver</tissue>
        <tissue>Lung</tissue>
        <tissue>Pancreas</tissue>
        <tissue>Spleen</tissue>
        <tissue>Testis</tissue>
    </source>
</reference>
<reference key="7">
    <citation type="submission" date="2009-05" db="PDB data bank">
        <title>Eukaryotic translation termination factor Gspt/ERF3 recognizes Pabp with chemical exchange using two overlapping motifs.</title>
        <authorList>
            <person name="Osawa M."/>
            <person name="Nakanishi T."/>
            <person name="Hosoda N."/>
            <person name="Uchida S."/>
            <person name="Hoshino T."/>
            <person name="Katada I."/>
            <person name="Shimada I."/>
        </authorList>
    </citation>
    <scope>STRUCTURE BY NMR OF 64-94 IN COMPLEX WITH PABPC1</scope>
</reference>
<gene>
    <name type="primary">Gspt1</name>
    <name type="synonym">Erf3a</name>
</gene>
<comment type="function">
    <text evidence="2">GTPase component of the eRF1-eRF3-GTP ternary complex, a ternary complex that mediates translation termination in response to the termination codons UAA, UAG and UGA. GSPT1/ERF3A mediates ETF1/ERF1 delivery to stop codons: The eRF1-eRF3-GTP complex binds to a stop codon in the ribosomal A-site. GTP hydrolysis by GSPT1/ERF3A induces a conformational change that leads to its dissociation, permitting ETF1/ERF1 to accommodate fully in the A-site. Component of the transient SURF complex which recruits UPF1 to stalled ribosomes in the context of nonsense-mediated decay (NMD) of mRNAs containing premature stop codons. Required for SHFL-mediated translation termination which inhibits programmed ribosomal frameshifting (-1PRF) of mRNA from viruses and cellular genes.</text>
</comment>
<comment type="catalytic activity">
    <reaction evidence="2">
        <text>GTP + H2O = GDP + phosphate + H(+)</text>
        <dbReference type="Rhea" id="RHEA:19669"/>
        <dbReference type="ChEBI" id="CHEBI:15377"/>
        <dbReference type="ChEBI" id="CHEBI:15378"/>
        <dbReference type="ChEBI" id="CHEBI:37565"/>
        <dbReference type="ChEBI" id="CHEBI:43474"/>
        <dbReference type="ChEBI" id="CHEBI:58189"/>
    </reaction>
    <physiologicalReaction direction="left-to-right" evidence="2">
        <dbReference type="Rhea" id="RHEA:19670"/>
    </physiologicalReaction>
</comment>
<comment type="subunit">
    <text evidence="2 5">Component of the eRF1-eRF3-GTP ternary complex, composed of ETF1/ERF1 and ERF3 (GSPT1/ERF3A or GSPT2/ERF3B) and GTP. Component of the transient SURF (SMG1-UPF1-eRF1-eRF3) complex. The ETF1-GSPT1 complex interacts with JMJD4 (By similarity). Interacts with PABPC1 (Ref.7). Interacts with SHFL (By similarity).</text>
</comment>
<comment type="alternative products">
    <event type="alternative splicing"/>
    <isoform>
        <id>Q8R050-1</id>
        <name>1</name>
        <sequence type="displayed"/>
    </isoform>
    <isoform>
        <id>Q8R050-2</id>
        <name>2</name>
        <sequence type="described" ref="VSP_043829"/>
    </isoform>
</comment>
<comment type="similarity">
    <text evidence="3">Belongs to the TRAFAC class translation factor GTPase superfamily. Classic translation factor GTPase family. ERF3 subfamily.</text>
</comment>
<comment type="sequence caution" evidence="7">
    <conflict type="erroneous initiation">
        <sequence resource="EMBL-CDS" id="AAH28325"/>
    </conflict>
    <text>Truncated N-terminus.</text>
</comment>
<comment type="sequence caution" evidence="7">
    <conflict type="erroneous initiation">
        <sequence resource="EMBL-CDS" id="AAH31640"/>
    </conflict>
    <text>Truncated N-terminus.</text>
</comment>
<protein>
    <recommendedName>
        <fullName>Eukaryotic peptide chain release factor GTP-binding subunit ERF3A</fullName>
        <shortName>Eukaryotic peptide chain release factor subunit 3a</shortName>
        <shortName>eRF3a</shortName>
        <ecNumber evidence="2">3.6.5.-</ecNumber>
    </recommendedName>
    <alternativeName>
        <fullName>G1 to S phase transition protein 1 homolog</fullName>
    </alternativeName>
</protein>
<dbReference type="EC" id="3.6.5.-" evidence="2"/>
<dbReference type="EMBL" id="AC087541">
    <property type="status" value="NOT_ANNOTATED_CDS"/>
    <property type="molecule type" value="Genomic_DNA"/>
</dbReference>
<dbReference type="EMBL" id="CH466521">
    <property type="protein sequence ID" value="EDK97345.1"/>
    <property type="molecule type" value="Genomic_DNA"/>
</dbReference>
<dbReference type="EMBL" id="BC028325">
    <property type="protein sequence ID" value="AAH28325.1"/>
    <property type="status" value="ALT_INIT"/>
    <property type="molecule type" value="mRNA"/>
</dbReference>
<dbReference type="EMBL" id="BC031640">
    <property type="protein sequence ID" value="AAH31640.1"/>
    <property type="status" value="ALT_INIT"/>
    <property type="molecule type" value="mRNA"/>
</dbReference>
<dbReference type="EMBL" id="AB003502">
    <property type="protein sequence ID" value="BAA32526.1"/>
    <property type="molecule type" value="mRNA"/>
</dbReference>
<dbReference type="CCDS" id="CCDS27961.2">
    <molecule id="Q8R050-1"/>
</dbReference>
<dbReference type="CCDS" id="CCDS49764.1">
    <molecule id="Q8R050-2"/>
</dbReference>
<dbReference type="RefSeq" id="NP_001123480.1">
    <molecule id="Q8R050-2"/>
    <property type="nucleotide sequence ID" value="NM_001130008.1"/>
</dbReference>
<dbReference type="RefSeq" id="NP_666178.2">
    <molecule id="Q8R050-1"/>
    <property type="nucleotide sequence ID" value="NM_146066.2"/>
</dbReference>
<dbReference type="PDB" id="2RQG">
    <property type="method" value="NMR"/>
    <property type="chains" value="A=64-82"/>
</dbReference>
<dbReference type="PDB" id="2RQH">
    <property type="method" value="NMR"/>
    <property type="chains" value="A=73-94"/>
</dbReference>
<dbReference type="PDBsum" id="2RQG"/>
<dbReference type="PDBsum" id="2RQH"/>
<dbReference type="BMRB" id="Q8R050"/>
<dbReference type="SMR" id="Q8R050"/>
<dbReference type="BioGRID" id="200087">
    <property type="interactions" value="54"/>
</dbReference>
<dbReference type="ComplexPortal" id="CPX-670">
    <property type="entry name" value="ERF1-ERF3 translation release factor complex, Gspt1 variant"/>
</dbReference>
<dbReference type="FunCoup" id="Q8R050">
    <property type="interactions" value="2079"/>
</dbReference>
<dbReference type="IntAct" id="Q8R050">
    <property type="interactions" value="36"/>
</dbReference>
<dbReference type="MINT" id="Q8R050"/>
<dbReference type="STRING" id="10090.ENSMUSP00000078940"/>
<dbReference type="GlyGen" id="Q8R050">
    <property type="glycosylation" value="1 site, 1 O-linked glycan (1 site)"/>
</dbReference>
<dbReference type="iPTMnet" id="Q8R050"/>
<dbReference type="PhosphoSitePlus" id="Q8R050"/>
<dbReference type="SwissPalm" id="Q8R050"/>
<dbReference type="jPOST" id="Q8R050"/>
<dbReference type="PaxDb" id="10090-ENSMUSP00000078940"/>
<dbReference type="PeptideAtlas" id="Q8R050"/>
<dbReference type="ProteomicsDB" id="275796">
    <molecule id="Q8R050-1"/>
</dbReference>
<dbReference type="ProteomicsDB" id="275797">
    <molecule id="Q8R050-2"/>
</dbReference>
<dbReference type="Pumba" id="Q8R050"/>
<dbReference type="Antibodypedia" id="24757">
    <property type="antibodies" value="174 antibodies from 31 providers"/>
</dbReference>
<dbReference type="DNASU" id="14852"/>
<dbReference type="Ensembl" id="ENSMUST00000080030.14">
    <molecule id="Q8R050-1"/>
    <property type="protein sequence ID" value="ENSMUSP00000078940.8"/>
    <property type="gene ID" value="ENSMUSG00000062203.16"/>
</dbReference>
<dbReference type="Ensembl" id="ENSMUST00000167571.8">
    <molecule id="Q8R050-2"/>
    <property type="protein sequence ID" value="ENSMUSP00000130583.2"/>
    <property type="gene ID" value="ENSMUSG00000062203.16"/>
</dbReference>
<dbReference type="GeneID" id="14852"/>
<dbReference type="KEGG" id="mmu:14852"/>
<dbReference type="UCSC" id="uc007yfe.2">
    <molecule id="Q8R050-1"/>
    <property type="organism name" value="mouse"/>
</dbReference>
<dbReference type="UCSC" id="uc007yff.2">
    <molecule id="Q8R050-2"/>
    <property type="organism name" value="mouse"/>
</dbReference>
<dbReference type="AGR" id="MGI:1316728"/>
<dbReference type="CTD" id="2935"/>
<dbReference type="MGI" id="MGI:1316728">
    <property type="gene designation" value="Gspt1"/>
</dbReference>
<dbReference type="VEuPathDB" id="HostDB:ENSMUSG00000062203"/>
<dbReference type="eggNOG" id="KOG0459">
    <property type="taxonomic scope" value="Eukaryota"/>
</dbReference>
<dbReference type="GeneTree" id="ENSGT00940000155582"/>
<dbReference type="HOGENOM" id="CLU_007265_3_8_1"/>
<dbReference type="InParanoid" id="Q8R050"/>
<dbReference type="OMA" id="DLCWFDD"/>
<dbReference type="OrthoDB" id="342024at2759"/>
<dbReference type="PhylomeDB" id="Q8R050"/>
<dbReference type="TreeFam" id="TF300566"/>
<dbReference type="Reactome" id="R-MMU-72764">
    <property type="pathway name" value="Eukaryotic Translation Termination"/>
</dbReference>
<dbReference type="Reactome" id="R-MMU-975956">
    <property type="pathway name" value="Nonsense Mediated Decay (NMD) independent of the Exon Junction Complex (EJC)"/>
</dbReference>
<dbReference type="Reactome" id="R-MMU-975957">
    <property type="pathway name" value="Nonsense Mediated Decay (NMD) enhanced by the Exon Junction Complex (EJC)"/>
</dbReference>
<dbReference type="BioGRID-ORCS" id="14852">
    <property type="hits" value="24 hits in 76 CRISPR screens"/>
</dbReference>
<dbReference type="ChiTaRS" id="Gspt1">
    <property type="organism name" value="mouse"/>
</dbReference>
<dbReference type="EvolutionaryTrace" id="Q8R050"/>
<dbReference type="PRO" id="PR:Q8R050"/>
<dbReference type="Proteomes" id="UP000000589">
    <property type="component" value="Chromosome 16"/>
</dbReference>
<dbReference type="RNAct" id="Q8R050">
    <property type="molecule type" value="protein"/>
</dbReference>
<dbReference type="Bgee" id="ENSMUSG00000062203">
    <property type="expression patterns" value="Expressed in embryonic post-anal tail and 265 other cell types or tissues"/>
</dbReference>
<dbReference type="ExpressionAtlas" id="Q8R050">
    <property type="expression patterns" value="baseline and differential"/>
</dbReference>
<dbReference type="GO" id="GO:0005737">
    <property type="term" value="C:cytoplasm"/>
    <property type="evidence" value="ECO:0000303"/>
    <property type="project" value="ComplexPortal"/>
</dbReference>
<dbReference type="GO" id="GO:0022626">
    <property type="term" value="C:cytosolic ribosome"/>
    <property type="evidence" value="ECO:0007669"/>
    <property type="project" value="Ensembl"/>
</dbReference>
<dbReference type="GO" id="GO:0018444">
    <property type="term" value="C:translation release factor complex"/>
    <property type="evidence" value="ECO:0000266"/>
    <property type="project" value="ComplexPortal"/>
</dbReference>
<dbReference type="GO" id="GO:0005525">
    <property type="term" value="F:GTP binding"/>
    <property type="evidence" value="ECO:0007669"/>
    <property type="project" value="UniProtKB-KW"/>
</dbReference>
<dbReference type="GO" id="GO:0003924">
    <property type="term" value="F:GTPase activity"/>
    <property type="evidence" value="ECO:0007669"/>
    <property type="project" value="Ensembl"/>
</dbReference>
<dbReference type="GO" id="GO:0003747">
    <property type="term" value="F:translation release factor activity"/>
    <property type="evidence" value="ECO:0000250"/>
    <property type="project" value="UniProtKB"/>
</dbReference>
<dbReference type="GO" id="GO:0000184">
    <property type="term" value="P:nuclear-transcribed mRNA catabolic process, nonsense-mediated decay"/>
    <property type="evidence" value="ECO:0007669"/>
    <property type="project" value="UniProtKB-KW"/>
</dbReference>
<dbReference type="GO" id="GO:0006449">
    <property type="term" value="P:regulation of translational termination"/>
    <property type="evidence" value="ECO:0000250"/>
    <property type="project" value="UniProtKB"/>
</dbReference>
<dbReference type="GO" id="GO:0006415">
    <property type="term" value="P:translational termination"/>
    <property type="evidence" value="ECO:0000266"/>
    <property type="project" value="ComplexPortal"/>
</dbReference>
<dbReference type="CDD" id="cd01883">
    <property type="entry name" value="EF1_alpha"/>
    <property type="match status" value="1"/>
</dbReference>
<dbReference type="CDD" id="cd03704">
    <property type="entry name" value="eRF3_C_III"/>
    <property type="match status" value="1"/>
</dbReference>
<dbReference type="CDD" id="cd04089">
    <property type="entry name" value="eRF3_II"/>
    <property type="match status" value="1"/>
</dbReference>
<dbReference type="FunFam" id="2.40.30.10:FF:000017">
    <property type="entry name" value="Eukaryotic peptide chain release factor GTP-binding subunit"/>
    <property type="match status" value="1"/>
</dbReference>
<dbReference type="FunFam" id="2.40.30.10:FF:000024">
    <property type="entry name" value="Eukaryotic peptide chain release factor GTP-binding subunit ERF3A"/>
    <property type="match status" value="1"/>
</dbReference>
<dbReference type="FunFam" id="3.40.50.300:FF:000270">
    <property type="entry name" value="Eukaryotic peptide chain release factor GTP-binding subunit ERF3A"/>
    <property type="match status" value="1"/>
</dbReference>
<dbReference type="Gene3D" id="3.40.50.300">
    <property type="entry name" value="P-loop containing nucleotide triphosphate hydrolases"/>
    <property type="match status" value="1"/>
</dbReference>
<dbReference type="Gene3D" id="2.40.30.10">
    <property type="entry name" value="Translation factors"/>
    <property type="match status" value="2"/>
</dbReference>
<dbReference type="InterPro" id="IPR004161">
    <property type="entry name" value="EFTu-like_2"/>
</dbReference>
<dbReference type="InterPro" id="IPR031157">
    <property type="entry name" value="G_TR_CS"/>
</dbReference>
<dbReference type="InterPro" id="IPR054696">
    <property type="entry name" value="GTP-eEF1A_C"/>
</dbReference>
<dbReference type="InterPro" id="IPR027417">
    <property type="entry name" value="P-loop_NTPase"/>
</dbReference>
<dbReference type="InterPro" id="IPR009818">
    <property type="entry name" value="PAM2_motif"/>
</dbReference>
<dbReference type="InterPro" id="IPR000795">
    <property type="entry name" value="T_Tr_GTP-bd_dom"/>
</dbReference>
<dbReference type="InterPro" id="IPR050100">
    <property type="entry name" value="TRAFAC_GTPase_members"/>
</dbReference>
<dbReference type="InterPro" id="IPR009000">
    <property type="entry name" value="Transl_B-barrel_sf"/>
</dbReference>
<dbReference type="InterPro" id="IPR009001">
    <property type="entry name" value="Transl_elong_EF1A/Init_IF2_C"/>
</dbReference>
<dbReference type="PANTHER" id="PTHR23115">
    <property type="entry name" value="TRANSLATION FACTOR"/>
    <property type="match status" value="1"/>
</dbReference>
<dbReference type="Pfam" id="PF22594">
    <property type="entry name" value="GTP-eEF1A_C"/>
    <property type="match status" value="1"/>
</dbReference>
<dbReference type="Pfam" id="PF00009">
    <property type="entry name" value="GTP_EFTU"/>
    <property type="match status" value="1"/>
</dbReference>
<dbReference type="Pfam" id="PF03144">
    <property type="entry name" value="GTP_EFTU_D2"/>
    <property type="match status" value="1"/>
</dbReference>
<dbReference type="Pfam" id="PF07145">
    <property type="entry name" value="PAM2"/>
    <property type="match status" value="1"/>
</dbReference>
<dbReference type="PRINTS" id="PR00315">
    <property type="entry name" value="ELONGATNFCT"/>
</dbReference>
<dbReference type="SUPFAM" id="SSF50465">
    <property type="entry name" value="EF-Tu/eEF-1alpha/eIF2-gamma C-terminal domain"/>
    <property type="match status" value="1"/>
</dbReference>
<dbReference type="SUPFAM" id="SSF52540">
    <property type="entry name" value="P-loop containing nucleoside triphosphate hydrolases"/>
    <property type="match status" value="1"/>
</dbReference>
<dbReference type="SUPFAM" id="SSF50447">
    <property type="entry name" value="Translation proteins"/>
    <property type="match status" value="1"/>
</dbReference>
<dbReference type="PROSITE" id="PS00301">
    <property type="entry name" value="G_TR_1"/>
    <property type="match status" value="1"/>
</dbReference>
<dbReference type="PROSITE" id="PS51722">
    <property type="entry name" value="G_TR_2"/>
    <property type="match status" value="1"/>
</dbReference>
<accession>Q8R050</accession>
<accession>E9QK49</accession>
<accession>G3UWC0</accession>
<accession>O88179</accession>
<accession>Q8K2E1</accession>
<feature type="chain" id="PRO_0000091481" description="Eukaryotic peptide chain release factor GTP-binding subunit ERF3A">
    <location>
        <begin position="1"/>
        <end position="636"/>
    </location>
</feature>
<feature type="domain" description="tr-type G" evidence="3">
    <location>
        <begin position="209"/>
        <end position="435"/>
    </location>
</feature>
<feature type="region of interest" description="Disordered" evidence="4">
    <location>
        <begin position="1"/>
        <end position="54"/>
    </location>
</feature>
<feature type="region of interest" description="Disordered" evidence="4">
    <location>
        <begin position="90"/>
        <end position="206"/>
    </location>
</feature>
<feature type="region of interest" description="G1" evidence="3">
    <location>
        <begin position="218"/>
        <end position="225"/>
    </location>
</feature>
<feature type="region of interest" description="G2" evidence="3">
    <location>
        <begin position="274"/>
        <end position="278"/>
    </location>
</feature>
<feature type="region of interest" description="G3" evidence="3">
    <location>
        <begin position="295"/>
        <end position="298"/>
    </location>
</feature>
<feature type="region of interest" description="G4" evidence="3">
    <location>
        <begin position="357"/>
        <end position="360"/>
    </location>
</feature>
<feature type="region of interest" description="G5" evidence="3">
    <location>
        <begin position="399"/>
        <end position="401"/>
    </location>
</feature>
<feature type="compositionally biased region" description="Gly residues" evidence="4">
    <location>
        <begin position="1"/>
        <end position="16"/>
    </location>
</feature>
<feature type="compositionally biased region" description="Gly residues" evidence="4">
    <location>
        <begin position="103"/>
        <end position="116"/>
    </location>
</feature>
<feature type="compositionally biased region" description="Polar residues" evidence="4">
    <location>
        <begin position="121"/>
        <end position="138"/>
    </location>
</feature>
<feature type="compositionally biased region" description="Acidic residues" evidence="4">
    <location>
        <begin position="183"/>
        <end position="193"/>
    </location>
</feature>
<feature type="binding site" evidence="1">
    <location>
        <begin position="221"/>
        <end position="226"/>
    </location>
    <ligand>
        <name>GTP</name>
        <dbReference type="ChEBI" id="CHEBI:37565"/>
    </ligand>
</feature>
<feature type="binding site" evidence="1">
    <location>
        <begin position="357"/>
        <end position="360"/>
    </location>
    <ligand>
        <name>GTP</name>
        <dbReference type="ChEBI" id="CHEBI:37565"/>
    </ligand>
</feature>
<feature type="binding site" evidence="1">
    <location>
        <begin position="399"/>
        <end position="401"/>
    </location>
    <ligand>
        <name>GTP</name>
        <dbReference type="ChEBI" id="CHEBI:37565"/>
    </ligand>
</feature>
<feature type="splice variant" id="VSP_043829" description="In isoform 2." evidence="6">
    <location>
        <position position="145"/>
    </location>
</feature>
<feature type="sequence conflict" description="In Ref. 3; AAH31640." evidence="7" ref="3">
    <original>G</original>
    <variation>A</variation>
    <location>
        <position position="41"/>
    </location>
</feature>
<feature type="sequence conflict" description="In Ref. 4; BAA32526." evidence="7" ref="4">
    <original>S</original>
    <variation>C</variation>
    <location>
        <position position="485"/>
    </location>
</feature>
<feature type="sequence conflict" description="In Ref. 4; BAA32526." evidence="7" ref="4">
    <original>T</original>
    <variation>R</variation>
    <location>
        <position position="615"/>
    </location>
</feature>
<keyword id="KW-0002">3D-structure</keyword>
<keyword id="KW-0025">Alternative splicing</keyword>
<keyword id="KW-0903">Direct protein sequencing</keyword>
<keyword id="KW-0342">GTP-binding</keyword>
<keyword id="KW-0378">Hydrolase</keyword>
<keyword id="KW-0866">Nonsense-mediated mRNA decay</keyword>
<keyword id="KW-0547">Nucleotide-binding</keyword>
<keyword id="KW-0648">Protein biosynthesis</keyword>
<keyword id="KW-1185">Reference proteome</keyword>
<organism>
    <name type="scientific">Mus musculus</name>
    <name type="common">Mouse</name>
    <dbReference type="NCBI Taxonomy" id="10090"/>
    <lineage>
        <taxon>Eukaryota</taxon>
        <taxon>Metazoa</taxon>
        <taxon>Chordata</taxon>
        <taxon>Craniata</taxon>
        <taxon>Vertebrata</taxon>
        <taxon>Euteleostomi</taxon>
        <taxon>Mammalia</taxon>
        <taxon>Eutheria</taxon>
        <taxon>Euarchontoglires</taxon>
        <taxon>Glires</taxon>
        <taxon>Rodentia</taxon>
        <taxon>Myomorpha</taxon>
        <taxon>Muroidea</taxon>
        <taxon>Muridae</taxon>
        <taxon>Murinae</taxon>
        <taxon>Mus</taxon>
        <taxon>Mus</taxon>
    </lineage>
</organism>
<evidence type="ECO:0000250" key="1">
    <source>
        <dbReference type="UniProtKB" id="O74718"/>
    </source>
</evidence>
<evidence type="ECO:0000250" key="2">
    <source>
        <dbReference type="UniProtKB" id="P15170"/>
    </source>
</evidence>
<evidence type="ECO:0000255" key="3">
    <source>
        <dbReference type="PROSITE-ProRule" id="PRU01059"/>
    </source>
</evidence>
<evidence type="ECO:0000256" key="4">
    <source>
        <dbReference type="SAM" id="MobiDB-lite"/>
    </source>
</evidence>
<evidence type="ECO:0000269" key="5">
    <source ref="7"/>
</evidence>
<evidence type="ECO:0000303" key="6">
    <source>
    </source>
</evidence>
<evidence type="ECO:0000305" key="7"/>
<proteinExistence type="evidence at protein level"/>